<proteinExistence type="inferred from homology"/>
<comment type="function">
    <text evidence="1">Dual-specificity methyltransferase that catalyzes the formation of 5-methyluridine at position 54 (m5U54) in all tRNAs, and that of position 341 (m5U341) in tmRNA (transfer-mRNA).</text>
</comment>
<comment type="catalytic activity">
    <reaction evidence="1">
        <text>uridine(54) in tRNA + S-adenosyl-L-methionine = 5-methyluridine(54) in tRNA + S-adenosyl-L-homocysteine + H(+)</text>
        <dbReference type="Rhea" id="RHEA:42712"/>
        <dbReference type="Rhea" id="RHEA-COMP:10167"/>
        <dbReference type="Rhea" id="RHEA-COMP:10193"/>
        <dbReference type="ChEBI" id="CHEBI:15378"/>
        <dbReference type="ChEBI" id="CHEBI:57856"/>
        <dbReference type="ChEBI" id="CHEBI:59789"/>
        <dbReference type="ChEBI" id="CHEBI:65315"/>
        <dbReference type="ChEBI" id="CHEBI:74447"/>
        <dbReference type="EC" id="2.1.1.35"/>
    </reaction>
</comment>
<comment type="catalytic activity">
    <reaction evidence="1">
        <text>uridine(341) in tmRNA + S-adenosyl-L-methionine = 5-methyluridine(341) in tmRNA + S-adenosyl-L-homocysteine + H(+)</text>
        <dbReference type="Rhea" id="RHEA:43612"/>
        <dbReference type="Rhea" id="RHEA-COMP:10630"/>
        <dbReference type="Rhea" id="RHEA-COMP:10631"/>
        <dbReference type="ChEBI" id="CHEBI:15378"/>
        <dbReference type="ChEBI" id="CHEBI:57856"/>
        <dbReference type="ChEBI" id="CHEBI:59789"/>
        <dbReference type="ChEBI" id="CHEBI:65315"/>
        <dbReference type="ChEBI" id="CHEBI:74447"/>
    </reaction>
</comment>
<comment type="similarity">
    <text evidence="1">Belongs to the class I-like SAM-binding methyltransferase superfamily. RNA M5U methyltransferase family. TrmA subfamily.</text>
</comment>
<evidence type="ECO:0000255" key="1">
    <source>
        <dbReference type="HAMAP-Rule" id="MF_01011"/>
    </source>
</evidence>
<dbReference type="EC" id="2.1.1.-" evidence="1"/>
<dbReference type="EC" id="2.1.1.35" evidence="1"/>
<dbReference type="EMBL" id="CP001172">
    <property type="protein sequence ID" value="ACJ59297.1"/>
    <property type="molecule type" value="Genomic_DNA"/>
</dbReference>
<dbReference type="RefSeq" id="WP_000204682.1">
    <property type="nucleotide sequence ID" value="NZ_CP001172.1"/>
</dbReference>
<dbReference type="SMR" id="B7H3Q6"/>
<dbReference type="HOGENOM" id="CLU_043022_0_0_6"/>
<dbReference type="Proteomes" id="UP000006924">
    <property type="component" value="Chromosome"/>
</dbReference>
<dbReference type="GO" id="GO:0005829">
    <property type="term" value="C:cytosol"/>
    <property type="evidence" value="ECO:0007669"/>
    <property type="project" value="TreeGrafter"/>
</dbReference>
<dbReference type="GO" id="GO:0019843">
    <property type="term" value="F:rRNA binding"/>
    <property type="evidence" value="ECO:0007669"/>
    <property type="project" value="TreeGrafter"/>
</dbReference>
<dbReference type="GO" id="GO:0030697">
    <property type="term" value="F:tRNA (uracil(54)-C5)-methyltransferase activity, S-adenosyl methionine-dependent"/>
    <property type="evidence" value="ECO:0007669"/>
    <property type="project" value="UniProtKB-UniRule"/>
</dbReference>
<dbReference type="GO" id="GO:0000049">
    <property type="term" value="F:tRNA binding"/>
    <property type="evidence" value="ECO:0007669"/>
    <property type="project" value="TreeGrafter"/>
</dbReference>
<dbReference type="GO" id="GO:0030488">
    <property type="term" value="P:tRNA methylation"/>
    <property type="evidence" value="ECO:0007669"/>
    <property type="project" value="UniProtKB-UniRule"/>
</dbReference>
<dbReference type="CDD" id="cd02440">
    <property type="entry name" value="AdoMet_MTases"/>
    <property type="match status" value="1"/>
</dbReference>
<dbReference type="FunFam" id="2.40.50.1070:FF:000001">
    <property type="entry name" value="tRNA/tmRNA (uracil-C(5))-methyltransferase"/>
    <property type="match status" value="1"/>
</dbReference>
<dbReference type="FunFam" id="3.40.50.150:FF:000012">
    <property type="entry name" value="tRNA/tmRNA (uracil-C(5))-methyltransferase"/>
    <property type="match status" value="1"/>
</dbReference>
<dbReference type="Gene3D" id="2.40.50.1070">
    <property type="match status" value="1"/>
</dbReference>
<dbReference type="Gene3D" id="3.40.50.150">
    <property type="entry name" value="Vaccinia Virus protein VP39"/>
    <property type="match status" value="1"/>
</dbReference>
<dbReference type="HAMAP" id="MF_01011">
    <property type="entry name" value="RNA_methyltr_TrmA"/>
    <property type="match status" value="1"/>
</dbReference>
<dbReference type="InterPro" id="IPR030390">
    <property type="entry name" value="MeTrfase_TrmA_AS"/>
</dbReference>
<dbReference type="InterPro" id="IPR030391">
    <property type="entry name" value="MeTrfase_TrmA_CS"/>
</dbReference>
<dbReference type="InterPro" id="IPR029063">
    <property type="entry name" value="SAM-dependent_MTases_sf"/>
</dbReference>
<dbReference type="InterPro" id="IPR011869">
    <property type="entry name" value="TrmA_MeTrfase"/>
</dbReference>
<dbReference type="InterPro" id="IPR010280">
    <property type="entry name" value="U5_MeTrfase_fam"/>
</dbReference>
<dbReference type="NCBIfam" id="TIGR02143">
    <property type="entry name" value="trmA_only"/>
    <property type="match status" value="1"/>
</dbReference>
<dbReference type="PANTHER" id="PTHR47790">
    <property type="entry name" value="TRNA/TMRNA (URACIL-C(5))-METHYLTRANSFERASE"/>
    <property type="match status" value="1"/>
</dbReference>
<dbReference type="PANTHER" id="PTHR47790:SF2">
    <property type="entry name" value="TRNA_TMRNA (URACIL-C(5))-METHYLTRANSFERASE"/>
    <property type="match status" value="1"/>
</dbReference>
<dbReference type="Pfam" id="PF05958">
    <property type="entry name" value="tRNA_U5-meth_tr"/>
    <property type="match status" value="1"/>
</dbReference>
<dbReference type="SUPFAM" id="SSF53335">
    <property type="entry name" value="S-adenosyl-L-methionine-dependent methyltransferases"/>
    <property type="match status" value="1"/>
</dbReference>
<dbReference type="PROSITE" id="PS51687">
    <property type="entry name" value="SAM_MT_RNA_M5U"/>
    <property type="match status" value="1"/>
</dbReference>
<dbReference type="PROSITE" id="PS01230">
    <property type="entry name" value="TRMA_1"/>
    <property type="match status" value="1"/>
</dbReference>
<dbReference type="PROSITE" id="PS01231">
    <property type="entry name" value="TRMA_2"/>
    <property type="match status" value="1"/>
</dbReference>
<keyword id="KW-0489">Methyltransferase</keyword>
<keyword id="KW-0949">S-adenosyl-L-methionine</keyword>
<keyword id="KW-0808">Transferase</keyword>
<keyword id="KW-0819">tRNA processing</keyword>
<name>TRMA_ACIB3</name>
<sequence>MTSSYRQQLQAKIDRITTQFSEFTPPTLEVFESPEQHFRMRAEFRIWHTENDMFYAMFERNDDGKQKTVVRIDEFPIADKSINDLMPLLLAELKANSLLSQRLFEVDFLATLSGEMLVTLIYHRKLNQEWEQAAKALAEKLNIKIMGRSRGQKIVIGDDFVVEEFELLNRSFKYKQIESSFTQPNAQVCKKMLQWACDAAEGSKKHLLELYCGNGNFTLPLSLKFERVLATELAKSSVYAAQWNIEQNQIDNIQVARLSAEEFTQAYQGEREFRRLQEADIDIQSYDFGTVFVDPPRAGIDDETLKLLQGFERIIYISCNPDTLYENLKTLTQTHRVTKFALFDQFPYTHHVESGVLLEKI</sequence>
<gene>
    <name evidence="1" type="primary">trmA</name>
    <name type="ordered locus">ABBFA_001951</name>
</gene>
<protein>
    <recommendedName>
        <fullName evidence="1">tRNA/tmRNA (uracil-C(5))-methyltransferase</fullName>
        <ecNumber evidence="1">2.1.1.-</ecNumber>
        <ecNumber evidence="1">2.1.1.35</ecNumber>
    </recommendedName>
    <alternativeName>
        <fullName evidence="1">tRNA (uracil(54)-C(5))-methyltransferase</fullName>
    </alternativeName>
    <alternativeName>
        <fullName evidence="1">tRNA(m5U54)-methyltransferase</fullName>
        <shortName evidence="1">RUMT</shortName>
    </alternativeName>
    <alternativeName>
        <fullName evidence="1">tmRNA (uracil(341)-C(5))-methyltransferase</fullName>
    </alternativeName>
</protein>
<reference key="1">
    <citation type="journal article" date="2008" name="J. Bacteriol.">
        <title>Comparative genome sequence analysis of multidrug-resistant Acinetobacter baumannii.</title>
        <authorList>
            <person name="Adams M.D."/>
            <person name="Goglin K."/>
            <person name="Molyneaux N."/>
            <person name="Hujer K.M."/>
            <person name="Lavender H."/>
            <person name="Jamison J.J."/>
            <person name="MacDonald I.J."/>
            <person name="Martin K.M."/>
            <person name="Russo T."/>
            <person name="Campagnari A.A."/>
            <person name="Hujer A.M."/>
            <person name="Bonomo R.A."/>
            <person name="Gill S.R."/>
        </authorList>
    </citation>
    <scope>NUCLEOTIDE SEQUENCE [LARGE SCALE GENOMIC DNA]</scope>
    <source>
        <strain>AB307-0294</strain>
    </source>
</reference>
<organism>
    <name type="scientific">Acinetobacter baumannii (strain AB307-0294)</name>
    <dbReference type="NCBI Taxonomy" id="557600"/>
    <lineage>
        <taxon>Bacteria</taxon>
        <taxon>Pseudomonadati</taxon>
        <taxon>Pseudomonadota</taxon>
        <taxon>Gammaproteobacteria</taxon>
        <taxon>Moraxellales</taxon>
        <taxon>Moraxellaceae</taxon>
        <taxon>Acinetobacter</taxon>
        <taxon>Acinetobacter calcoaceticus/baumannii complex</taxon>
    </lineage>
</organism>
<feature type="chain" id="PRO_0000388540" description="tRNA/tmRNA (uracil-C(5))-methyltransferase">
    <location>
        <begin position="1"/>
        <end position="361"/>
    </location>
</feature>
<feature type="active site" description="Nucleophile" evidence="1">
    <location>
        <position position="319"/>
    </location>
</feature>
<feature type="active site" description="Proton acceptor" evidence="1">
    <location>
        <position position="353"/>
    </location>
</feature>
<feature type="binding site" evidence="1">
    <location>
        <position position="183"/>
    </location>
    <ligand>
        <name>S-adenosyl-L-methionine</name>
        <dbReference type="ChEBI" id="CHEBI:59789"/>
    </ligand>
</feature>
<feature type="binding site" evidence="1">
    <location>
        <position position="211"/>
    </location>
    <ligand>
        <name>S-adenosyl-L-methionine</name>
        <dbReference type="ChEBI" id="CHEBI:59789"/>
    </ligand>
</feature>
<feature type="binding site" evidence="1">
    <location>
        <position position="216"/>
    </location>
    <ligand>
        <name>S-adenosyl-L-methionine</name>
        <dbReference type="ChEBI" id="CHEBI:59789"/>
    </ligand>
</feature>
<feature type="binding site" evidence="1">
    <location>
        <position position="232"/>
    </location>
    <ligand>
        <name>S-adenosyl-L-methionine</name>
        <dbReference type="ChEBI" id="CHEBI:59789"/>
    </ligand>
</feature>
<feature type="binding site" evidence="1">
    <location>
        <position position="294"/>
    </location>
    <ligand>
        <name>S-adenosyl-L-methionine</name>
        <dbReference type="ChEBI" id="CHEBI:59789"/>
    </ligand>
</feature>
<accession>B7H3Q6</accession>